<accession>Q9M1K0</accession>
<name>ORG3_ARATH</name>
<gene>
    <name type="primary">ORG3</name>
    <name type="synonym">BHLH39</name>
    <name type="synonym">EN9</name>
    <name type="ordered locus">At3g56980</name>
    <name type="ORF">F24I3.60</name>
</gene>
<evidence type="ECO:0000255" key="1">
    <source>
        <dbReference type="PROSITE-ProRule" id="PRU00981"/>
    </source>
</evidence>
<evidence type="ECO:0000269" key="2">
    <source>
    </source>
</evidence>
<evidence type="ECO:0000269" key="3">
    <source>
    </source>
</evidence>
<evidence type="ECO:0000269" key="4">
    <source>
    </source>
</evidence>
<evidence type="ECO:0000269" key="5">
    <source>
    </source>
</evidence>
<evidence type="ECO:0000305" key="6"/>
<sequence>MCALVPPLFPNFGWPSTGEYDSYYLAGDILNNGGFLDFPVPEETYGAVTAVTQHQNSFGVSVSSEGNEIDNNPVVVKKLNHNASERDRRRKINSLFSSLRSCLPASGQSKKLSIPATVSRSLKYIPELQEQVKKLIKKKEELLVQISGQRNTECYVKQPPKAVANYISTVSATRLGDNEVMVQISSSKIHNFSISNVLSGLEEDRFVLVDMSSSRSQGERLFYTLHLQVEKIENYKLNCEELSQRMLYLYEECGNSYI</sequence>
<proteinExistence type="evidence at protein level"/>
<protein>
    <recommendedName>
        <fullName>Transcription factor ORG3</fullName>
    </recommendedName>
    <alternativeName>
        <fullName>Basic helix-loop-helix protein 39</fullName>
        <shortName>AtbHLH39</shortName>
        <shortName>bHLH 39</shortName>
    </alternativeName>
    <alternativeName>
        <fullName>OBP3-responsive gene 3</fullName>
    </alternativeName>
    <alternativeName>
        <fullName>Transcription factor EN 9</fullName>
    </alternativeName>
    <alternativeName>
        <fullName>bHLH transcription factor bHLH039</fullName>
    </alternativeName>
</protein>
<reference key="1">
    <citation type="journal article" date="2003" name="Mol. Biol. Evol.">
        <title>The basic helix-loop-helix transcription factor family in plants: a genome-wide study of protein structure and functional diversity.</title>
        <authorList>
            <person name="Heim M.A."/>
            <person name="Jakoby M."/>
            <person name="Werber M."/>
            <person name="Martin C."/>
            <person name="Weisshaar B."/>
            <person name="Bailey P.C."/>
        </authorList>
    </citation>
    <scope>NUCLEOTIDE SEQUENCE [MRNA]</scope>
    <scope>TISSUE SPECIFICITY</scope>
    <scope>GENE FAMILY</scope>
    <scope>NOMENCLATURE</scope>
    <source>
        <strain>cv. Columbia</strain>
    </source>
</reference>
<reference key="2">
    <citation type="journal article" date="2000" name="Nature">
        <title>Sequence and analysis of chromosome 3 of the plant Arabidopsis thaliana.</title>
        <authorList>
            <person name="Salanoubat M."/>
            <person name="Lemcke K."/>
            <person name="Rieger M."/>
            <person name="Ansorge W."/>
            <person name="Unseld M."/>
            <person name="Fartmann B."/>
            <person name="Valle G."/>
            <person name="Bloecker H."/>
            <person name="Perez-Alonso M."/>
            <person name="Obermaier B."/>
            <person name="Delseny M."/>
            <person name="Boutry M."/>
            <person name="Grivell L.A."/>
            <person name="Mache R."/>
            <person name="Puigdomenech P."/>
            <person name="De Simone V."/>
            <person name="Choisne N."/>
            <person name="Artiguenave F."/>
            <person name="Robert C."/>
            <person name="Brottier P."/>
            <person name="Wincker P."/>
            <person name="Cattolico L."/>
            <person name="Weissenbach J."/>
            <person name="Saurin W."/>
            <person name="Quetier F."/>
            <person name="Schaefer M."/>
            <person name="Mueller-Auer S."/>
            <person name="Gabel C."/>
            <person name="Fuchs M."/>
            <person name="Benes V."/>
            <person name="Wurmbach E."/>
            <person name="Drzonek H."/>
            <person name="Erfle H."/>
            <person name="Jordan N."/>
            <person name="Bangert S."/>
            <person name="Wiedelmann R."/>
            <person name="Kranz H."/>
            <person name="Voss H."/>
            <person name="Holland R."/>
            <person name="Brandt P."/>
            <person name="Nyakatura G."/>
            <person name="Vezzi A."/>
            <person name="D'Angelo M."/>
            <person name="Pallavicini A."/>
            <person name="Toppo S."/>
            <person name="Simionati B."/>
            <person name="Conrad A."/>
            <person name="Hornischer K."/>
            <person name="Kauer G."/>
            <person name="Loehnert T.-H."/>
            <person name="Nordsiek G."/>
            <person name="Reichelt J."/>
            <person name="Scharfe M."/>
            <person name="Schoen O."/>
            <person name="Bargues M."/>
            <person name="Terol J."/>
            <person name="Climent J."/>
            <person name="Navarro P."/>
            <person name="Collado C."/>
            <person name="Perez-Perez A."/>
            <person name="Ottenwaelder B."/>
            <person name="Duchemin D."/>
            <person name="Cooke R."/>
            <person name="Laudie M."/>
            <person name="Berger-Llauro C."/>
            <person name="Purnelle B."/>
            <person name="Masuy D."/>
            <person name="de Haan M."/>
            <person name="Maarse A.C."/>
            <person name="Alcaraz J.-P."/>
            <person name="Cottet A."/>
            <person name="Casacuberta E."/>
            <person name="Monfort A."/>
            <person name="Argiriou A."/>
            <person name="Flores M."/>
            <person name="Liguori R."/>
            <person name="Vitale D."/>
            <person name="Mannhaupt G."/>
            <person name="Haase D."/>
            <person name="Schoof H."/>
            <person name="Rudd S."/>
            <person name="Zaccaria P."/>
            <person name="Mewes H.-W."/>
            <person name="Mayer K.F.X."/>
            <person name="Kaul S."/>
            <person name="Town C.D."/>
            <person name="Koo H.L."/>
            <person name="Tallon L.J."/>
            <person name="Jenkins J."/>
            <person name="Rooney T."/>
            <person name="Rizzo M."/>
            <person name="Walts A."/>
            <person name="Utterback T."/>
            <person name="Fujii C.Y."/>
            <person name="Shea T.P."/>
            <person name="Creasy T.H."/>
            <person name="Haas B."/>
            <person name="Maiti R."/>
            <person name="Wu D."/>
            <person name="Peterson J."/>
            <person name="Van Aken S."/>
            <person name="Pai G."/>
            <person name="Militscher J."/>
            <person name="Sellers P."/>
            <person name="Gill J.E."/>
            <person name="Feldblyum T.V."/>
            <person name="Preuss D."/>
            <person name="Lin X."/>
            <person name="Nierman W.C."/>
            <person name="Salzberg S.L."/>
            <person name="White O."/>
            <person name="Venter J.C."/>
            <person name="Fraser C.M."/>
            <person name="Kaneko T."/>
            <person name="Nakamura Y."/>
            <person name="Sato S."/>
            <person name="Kato T."/>
            <person name="Asamizu E."/>
            <person name="Sasamoto S."/>
            <person name="Kimura T."/>
            <person name="Idesawa K."/>
            <person name="Kawashima K."/>
            <person name="Kishida Y."/>
            <person name="Kiyokawa C."/>
            <person name="Kohara M."/>
            <person name="Matsumoto M."/>
            <person name="Matsuno A."/>
            <person name="Muraki A."/>
            <person name="Nakayama S."/>
            <person name="Nakazaki N."/>
            <person name="Shinpo S."/>
            <person name="Takeuchi C."/>
            <person name="Wada T."/>
            <person name="Watanabe A."/>
            <person name="Yamada M."/>
            <person name="Yasuda M."/>
            <person name="Tabata S."/>
        </authorList>
    </citation>
    <scope>NUCLEOTIDE SEQUENCE [LARGE SCALE GENOMIC DNA]</scope>
    <source>
        <strain>cv. Columbia</strain>
    </source>
</reference>
<reference key="3">
    <citation type="journal article" date="2017" name="Plant J.">
        <title>Araport11: a complete reannotation of the Arabidopsis thaliana reference genome.</title>
        <authorList>
            <person name="Cheng C.Y."/>
            <person name="Krishnakumar V."/>
            <person name="Chan A.P."/>
            <person name="Thibaud-Nissen F."/>
            <person name="Schobel S."/>
            <person name="Town C.D."/>
        </authorList>
    </citation>
    <scope>GENOME REANNOTATION</scope>
    <source>
        <strain>cv. Columbia</strain>
    </source>
</reference>
<reference key="4">
    <citation type="journal article" date="2003" name="Plant Cell">
        <title>The Arabidopsis basic/helix-loop-helix transcription factor family.</title>
        <authorList>
            <person name="Toledo-Ortiz G."/>
            <person name="Huq E."/>
            <person name="Quail P.H."/>
        </authorList>
    </citation>
    <scope>GENE FAMILY</scope>
</reference>
<reference key="5">
    <citation type="journal article" date="2003" name="Plant Cell">
        <title>Update on the basic helix-loop-helix transcription factor gene family in Arabidopsis thaliana.</title>
        <authorList>
            <person name="Bailey P.C."/>
            <person name="Martin C."/>
            <person name="Toledo-Ortiz G."/>
            <person name="Quail P.H."/>
            <person name="Huq E."/>
            <person name="Heim M.A."/>
            <person name="Jakoby M."/>
            <person name="Werber M."/>
            <person name="Weisshaar B."/>
        </authorList>
    </citation>
    <scope>GENE FAMILY</scope>
    <scope>NOMENCLATURE</scope>
</reference>
<reference key="6">
    <citation type="journal article" date="2003" name="Plant J.">
        <title>Target genes for OBP3, a Dof transcription factor, include novel basic helix-loop-helix domain proteins inducible by salicylic acid.</title>
        <authorList>
            <person name="Kang H.-G."/>
            <person name="Foley R.C."/>
            <person name="Onate-Sanchez L."/>
            <person name="Lin C."/>
            <person name="Singh K.B."/>
        </authorList>
    </citation>
    <scope>INDUCTION BY OBP3; JASMONIC ACID AND SALICYLIC ACID</scope>
</reference>
<reference key="7">
    <citation type="journal article" date="2007" name="Planta">
        <title>Iron deficiency-mediated stress regulation of four subgroup Ib BHLH genes in Arabidopsis thaliana.</title>
        <authorList>
            <person name="Wang H.-Y."/>
            <person name="Klatte M."/>
            <person name="Jakoby M."/>
            <person name="Baeumlein H."/>
            <person name="Weisshaar B."/>
            <person name="Bauer P."/>
        </authorList>
    </citation>
    <scope>INDUCTION</scope>
</reference>
<reference key="8">
    <citation type="journal article" date="2008" name="Plant Cell Physiol.">
        <title>Identification of genes expressed in vascular tissues using NPA-induced vascular overgrowth in Arabidopsis.</title>
        <authorList>
            <person name="Wenzel C.L."/>
            <person name="Hester Q."/>
            <person name="Mattsson J."/>
        </authorList>
    </citation>
    <scope>TISSUE SPECIFICITY</scope>
</reference>
<organism>
    <name type="scientific">Arabidopsis thaliana</name>
    <name type="common">Mouse-ear cress</name>
    <dbReference type="NCBI Taxonomy" id="3702"/>
    <lineage>
        <taxon>Eukaryota</taxon>
        <taxon>Viridiplantae</taxon>
        <taxon>Streptophyta</taxon>
        <taxon>Embryophyta</taxon>
        <taxon>Tracheophyta</taxon>
        <taxon>Spermatophyta</taxon>
        <taxon>Magnoliopsida</taxon>
        <taxon>eudicotyledons</taxon>
        <taxon>Gunneridae</taxon>
        <taxon>Pentapetalae</taxon>
        <taxon>rosids</taxon>
        <taxon>malvids</taxon>
        <taxon>Brassicales</taxon>
        <taxon>Brassicaceae</taxon>
        <taxon>Camelineae</taxon>
        <taxon>Arabidopsis</taxon>
    </lineage>
</organism>
<comment type="subunit">
    <text evidence="6">Homodimer.</text>
</comment>
<comment type="interaction">
    <interactant intactId="EBI-1640573">
        <id>Q9M1K0</id>
    </interactant>
    <interactant intactId="EBI-1640543">
        <id>Q0V7X4</id>
        <label>FIT</label>
    </interactant>
    <organismsDiffer>false</organismsDiffer>
    <experiments>5</experiments>
</comment>
<comment type="subcellular location">
    <subcellularLocation>
        <location evidence="1">Nucleus</location>
    </subcellularLocation>
</comment>
<comment type="tissue specificity">
    <text evidence="2 5">Expressed in vascular tissues. Detected in roots.</text>
</comment>
<comment type="induction">
    <text evidence="3 4">Induced by OBP3, auxin and salicylic acid (SA). Repressed by jasmonic acid (JA). Up regulated by iron deficiency in roots and leaves, as well as by nickel, high zinc or high copper treatments. Repressed by high iron, low copper and low zinc treatments.</text>
</comment>
<keyword id="KW-0238">DNA-binding</keyword>
<keyword id="KW-0539">Nucleus</keyword>
<keyword id="KW-1185">Reference proteome</keyword>
<keyword id="KW-0804">Transcription</keyword>
<keyword id="KW-0805">Transcription regulation</keyword>
<dbReference type="EMBL" id="AF488577">
    <property type="protein sequence ID" value="AAM10941.1"/>
    <property type="molecule type" value="mRNA"/>
</dbReference>
<dbReference type="EMBL" id="AL138655">
    <property type="protein sequence ID" value="CAB72168.1"/>
    <property type="molecule type" value="Genomic_DNA"/>
</dbReference>
<dbReference type="EMBL" id="CP002686">
    <property type="protein sequence ID" value="AEE79595.1"/>
    <property type="molecule type" value="Genomic_DNA"/>
</dbReference>
<dbReference type="PIR" id="T47758">
    <property type="entry name" value="T47758"/>
</dbReference>
<dbReference type="RefSeq" id="NP_191257.1">
    <property type="nucleotide sequence ID" value="NM_115557.3"/>
</dbReference>
<dbReference type="SMR" id="Q9M1K0"/>
<dbReference type="BioGRID" id="10181">
    <property type="interactions" value="3"/>
</dbReference>
<dbReference type="FunCoup" id="Q9M1K0">
    <property type="interactions" value="110"/>
</dbReference>
<dbReference type="IntAct" id="Q9M1K0">
    <property type="interactions" value="2"/>
</dbReference>
<dbReference type="STRING" id="3702.Q9M1K0"/>
<dbReference type="PaxDb" id="3702-AT3G56980.1"/>
<dbReference type="EnsemblPlants" id="AT3G56980.1">
    <property type="protein sequence ID" value="AT3G56980.1"/>
    <property type="gene ID" value="AT3G56980"/>
</dbReference>
<dbReference type="GeneID" id="824865"/>
<dbReference type="Gramene" id="AT3G56980.1">
    <property type="protein sequence ID" value="AT3G56980.1"/>
    <property type="gene ID" value="AT3G56980"/>
</dbReference>
<dbReference type="KEGG" id="ath:AT3G56980"/>
<dbReference type="Araport" id="AT3G56980"/>
<dbReference type="TAIR" id="AT3G56980">
    <property type="gene designation" value="BHLH39"/>
</dbReference>
<dbReference type="eggNOG" id="ENOG502RXMR">
    <property type="taxonomic scope" value="Eukaryota"/>
</dbReference>
<dbReference type="HOGENOM" id="CLU_089779_1_1_1"/>
<dbReference type="InParanoid" id="Q9M1K0"/>
<dbReference type="OMA" id="IFALCYN"/>
<dbReference type="OrthoDB" id="6106870at2759"/>
<dbReference type="PhylomeDB" id="Q9M1K0"/>
<dbReference type="PRO" id="PR:Q9M1K0"/>
<dbReference type="Proteomes" id="UP000006548">
    <property type="component" value="Chromosome 3"/>
</dbReference>
<dbReference type="ExpressionAtlas" id="Q9M1K0">
    <property type="expression patterns" value="baseline and differential"/>
</dbReference>
<dbReference type="GO" id="GO:0005634">
    <property type="term" value="C:nucleus"/>
    <property type="evidence" value="ECO:0007669"/>
    <property type="project" value="UniProtKB-SubCell"/>
</dbReference>
<dbReference type="GO" id="GO:0003677">
    <property type="term" value="F:DNA binding"/>
    <property type="evidence" value="ECO:0007669"/>
    <property type="project" value="UniProtKB-KW"/>
</dbReference>
<dbReference type="GO" id="GO:0003700">
    <property type="term" value="F:DNA-binding transcription factor activity"/>
    <property type="evidence" value="ECO:0000250"/>
    <property type="project" value="TAIR"/>
</dbReference>
<dbReference type="GO" id="GO:0046983">
    <property type="term" value="F:protein dimerization activity"/>
    <property type="evidence" value="ECO:0007669"/>
    <property type="project" value="InterPro"/>
</dbReference>
<dbReference type="GO" id="GO:0010106">
    <property type="term" value="P:cellular response to iron ion starvation"/>
    <property type="evidence" value="ECO:0000270"/>
    <property type="project" value="TAIR"/>
</dbReference>
<dbReference type="GO" id="GO:0006355">
    <property type="term" value="P:regulation of DNA-templated transcription"/>
    <property type="evidence" value="ECO:0000304"/>
    <property type="project" value="TAIR"/>
</dbReference>
<dbReference type="GO" id="GO:0006357">
    <property type="term" value="P:regulation of transcription by RNA polymerase II"/>
    <property type="evidence" value="ECO:0007669"/>
    <property type="project" value="InterPro"/>
</dbReference>
<dbReference type="CDD" id="cd18914">
    <property type="entry name" value="bHLH_AtORG2_like"/>
    <property type="match status" value="1"/>
</dbReference>
<dbReference type="FunFam" id="4.10.280.10:FF:000074">
    <property type="entry name" value="Transcription factor ORG2"/>
    <property type="match status" value="1"/>
</dbReference>
<dbReference type="Gene3D" id="4.10.280.10">
    <property type="entry name" value="Helix-loop-helix DNA-binding domain"/>
    <property type="match status" value="1"/>
</dbReference>
<dbReference type="InterPro" id="IPR011598">
    <property type="entry name" value="bHLH_dom"/>
</dbReference>
<dbReference type="InterPro" id="IPR036638">
    <property type="entry name" value="HLH_DNA-bd_sf"/>
</dbReference>
<dbReference type="InterPro" id="IPR015660">
    <property type="entry name" value="MASH1/Ascl1a-like"/>
</dbReference>
<dbReference type="PANTHER" id="PTHR13935">
    <property type="entry name" value="ACHAETE-SCUTE TRANSCRIPTION FACTOR-RELATED"/>
    <property type="match status" value="1"/>
</dbReference>
<dbReference type="PANTHER" id="PTHR13935:SF41">
    <property type="entry name" value="TRANSCRIPTION FACTOR ORG2-RELATED"/>
    <property type="match status" value="1"/>
</dbReference>
<dbReference type="Pfam" id="PF00010">
    <property type="entry name" value="HLH"/>
    <property type="match status" value="1"/>
</dbReference>
<dbReference type="SMART" id="SM00353">
    <property type="entry name" value="HLH"/>
    <property type="match status" value="1"/>
</dbReference>
<dbReference type="SUPFAM" id="SSF47459">
    <property type="entry name" value="HLH, helix-loop-helix DNA-binding domain"/>
    <property type="match status" value="1"/>
</dbReference>
<dbReference type="PROSITE" id="PS50888">
    <property type="entry name" value="BHLH"/>
    <property type="match status" value="1"/>
</dbReference>
<feature type="chain" id="PRO_0000358851" description="Transcription factor ORG3">
    <location>
        <begin position="1"/>
        <end position="258"/>
    </location>
</feature>
<feature type="domain" description="bHLH" evidence="1">
    <location>
        <begin position="76"/>
        <end position="128"/>
    </location>
</feature>